<dbReference type="EMBL" id="JQ258939">
    <property type="protein sequence ID" value="AFE85885.1"/>
    <property type="molecule type" value="mRNA"/>
</dbReference>
<dbReference type="EMBL" id="AK141249">
    <property type="protein sequence ID" value="BAE24615.1"/>
    <property type="molecule type" value="mRNA"/>
</dbReference>
<dbReference type="EMBL" id="BC147447">
    <property type="protein sequence ID" value="AAI47448.1"/>
    <property type="molecule type" value="mRNA"/>
</dbReference>
<dbReference type="EMBL" id="BC147469">
    <property type="protein sequence ID" value="AAI47470.1"/>
    <property type="molecule type" value="mRNA"/>
</dbReference>
<dbReference type="CCDS" id="CCDS80364.1">
    <molecule id="Q3URS3-1"/>
</dbReference>
<dbReference type="RefSeq" id="NP_001297638.1">
    <molecule id="Q3URS3-1"/>
    <property type="nucleotide sequence ID" value="NM_001310709.1"/>
</dbReference>
<dbReference type="RefSeq" id="XP_006535095.1">
    <molecule id="Q3URS3-1"/>
    <property type="nucleotide sequence ID" value="XM_006535032.2"/>
</dbReference>
<dbReference type="STRING" id="10090.ENSMUSP00000139397"/>
<dbReference type="PaxDb" id="10090-ENSMUSP00000098484"/>
<dbReference type="ProteomicsDB" id="252517">
    <molecule id="Q3URS3-1"/>
</dbReference>
<dbReference type="ProteomicsDB" id="252518">
    <molecule id="Q3URS3-2"/>
</dbReference>
<dbReference type="Ensembl" id="ENSMUST00000100924.5">
    <molecule id="Q3URS3-2"/>
    <property type="protein sequence ID" value="ENSMUSP00000098484.4"/>
    <property type="gene ID" value="ENSMUSG00000072754.10"/>
</dbReference>
<dbReference type="Ensembl" id="ENSMUST00000185691.7">
    <molecule id="Q3URS3-1"/>
    <property type="protein sequence ID" value="ENSMUSP00000139397.2"/>
    <property type="gene ID" value="ENSMUSG00000072754.10"/>
</dbReference>
<dbReference type="GeneID" id="381667"/>
<dbReference type="KEGG" id="mmu:381667"/>
<dbReference type="UCSC" id="uc008yqv.1">
    <molecule id="Q3URS3-1"/>
    <property type="organism name" value="mouse"/>
</dbReference>
<dbReference type="AGR" id="MGI:2686525"/>
<dbReference type="CTD" id="100507055"/>
<dbReference type="MGI" id="MGI:2686525">
    <property type="gene designation" value="Lrcol1"/>
</dbReference>
<dbReference type="VEuPathDB" id="HostDB:ENSMUSG00000072754"/>
<dbReference type="eggNOG" id="ENOG502TEXX">
    <property type="taxonomic scope" value="Eukaryota"/>
</dbReference>
<dbReference type="GeneTree" id="ENSGT00390000012041"/>
<dbReference type="HOGENOM" id="CLU_140741_0_0_1"/>
<dbReference type="InParanoid" id="Q3URS3"/>
<dbReference type="OMA" id="PQKFCTP"/>
<dbReference type="OrthoDB" id="9837822at2759"/>
<dbReference type="PhylomeDB" id="Q3URS3"/>
<dbReference type="TreeFam" id="TF352667"/>
<dbReference type="BioGRID-ORCS" id="381667">
    <property type="hits" value="2 hits in 76 CRISPR screens"/>
</dbReference>
<dbReference type="PRO" id="PR:Q3URS3"/>
<dbReference type="Proteomes" id="UP000000589">
    <property type="component" value="Chromosome 5"/>
</dbReference>
<dbReference type="RNAct" id="Q3URS3">
    <property type="molecule type" value="protein"/>
</dbReference>
<dbReference type="Bgee" id="ENSMUSG00000072754">
    <property type="expression patterns" value="Expressed in epiblast cell in embryo and 6 other cell types or tissues"/>
</dbReference>
<dbReference type="ExpressionAtlas" id="Q3URS3">
    <property type="expression patterns" value="baseline and differential"/>
</dbReference>
<dbReference type="GO" id="GO:0005576">
    <property type="term" value="C:extracellular region"/>
    <property type="evidence" value="ECO:0007669"/>
    <property type="project" value="InterPro"/>
</dbReference>
<dbReference type="GO" id="GO:0008047">
    <property type="term" value="F:enzyme activator activity"/>
    <property type="evidence" value="ECO:0007669"/>
    <property type="project" value="InterPro"/>
</dbReference>
<dbReference type="GO" id="GO:0007586">
    <property type="term" value="P:digestion"/>
    <property type="evidence" value="ECO:0007669"/>
    <property type="project" value="InterPro"/>
</dbReference>
<dbReference type="GO" id="GO:0016042">
    <property type="term" value="P:lipid catabolic process"/>
    <property type="evidence" value="ECO:0007669"/>
    <property type="project" value="InterPro"/>
</dbReference>
<dbReference type="FunFam" id="4.10.40.50:FF:000002">
    <property type="entry name" value="Leucine-rich colipase-like 1"/>
    <property type="match status" value="1"/>
</dbReference>
<dbReference type="Gene3D" id="4.10.40.50">
    <property type="match status" value="1"/>
</dbReference>
<dbReference type="InterPro" id="IPR001981">
    <property type="entry name" value="Colipase"/>
</dbReference>
<dbReference type="PANTHER" id="PTHR10041">
    <property type="entry name" value="COLIPASE"/>
    <property type="match status" value="1"/>
</dbReference>
<dbReference type="PANTHER" id="PTHR10041:SF5">
    <property type="entry name" value="LEUCINE-RICH COLIPASE-LIKE PROTEIN 1"/>
    <property type="match status" value="1"/>
</dbReference>
<dbReference type="Pfam" id="PF15083">
    <property type="entry name" value="Colipase-like"/>
    <property type="match status" value="2"/>
</dbReference>
<keyword id="KW-0025">Alternative splicing</keyword>
<keyword id="KW-1185">Reference proteome</keyword>
<keyword id="KW-0732">Signal</keyword>
<organism>
    <name type="scientific">Mus musculus</name>
    <name type="common">Mouse</name>
    <dbReference type="NCBI Taxonomy" id="10090"/>
    <lineage>
        <taxon>Eukaryota</taxon>
        <taxon>Metazoa</taxon>
        <taxon>Chordata</taxon>
        <taxon>Craniata</taxon>
        <taxon>Vertebrata</taxon>
        <taxon>Euteleostomi</taxon>
        <taxon>Mammalia</taxon>
        <taxon>Eutheria</taxon>
        <taxon>Euarchontoglires</taxon>
        <taxon>Glires</taxon>
        <taxon>Rodentia</taxon>
        <taxon>Myomorpha</taxon>
        <taxon>Muroidea</taxon>
        <taxon>Muridae</taxon>
        <taxon>Murinae</taxon>
        <taxon>Mus</taxon>
        <taxon>Mus</taxon>
    </lineage>
</organism>
<feature type="signal peptide" evidence="1">
    <location>
        <begin position="1"/>
        <end position="25"/>
    </location>
</feature>
<feature type="chain" id="PRO_0000346759" description="Leucine-rich colipase-like protein 1">
    <location>
        <begin position="26"/>
        <end position="161"/>
    </location>
</feature>
<feature type="splice variant" id="VSP_044127" description="In isoform 2." evidence="2 3">
    <location>
        <begin position="1"/>
        <end position="39"/>
    </location>
</feature>
<sequence length="161" mass="18181">MSVSVWPPLLLLLLLLLLWAVPTFQDKNTRVSAYKGIGEMCRNNSECQSDCCVTNSLNPQKFCTSQTVFLECVPWRKPNGFLCEENTECHSNCCIRTSSNPDRFCSSKTIFMQCISWRKPEGAICQHHLECWDLCCLPLSENSPSSHCTKRTGLLALCLPV</sequence>
<evidence type="ECO:0000255" key="1"/>
<evidence type="ECO:0000303" key="2">
    <source>
    </source>
</evidence>
<evidence type="ECO:0000303" key="3">
    <source>
    </source>
</evidence>
<protein>
    <recommendedName>
        <fullName>Leucine-rich colipase-like protein 1</fullName>
    </recommendedName>
    <alternativeName>
        <fullName>Colipase-like protein 3</fullName>
    </alternativeName>
</protein>
<proteinExistence type="evidence at transcript level"/>
<name>LRCL1_MOUSE</name>
<reference key="1">
    <citation type="submission" date="2011-12" db="EMBL/GenBank/DDBJ databases">
        <title>Cloning and characterization of the human colipase-like 3 and its homolog cDNA.</title>
        <authorList>
            <person name="Lu Y."/>
            <person name="Xue Y.C."/>
            <person name="Wang P.Z."/>
            <person name="Ma D.L."/>
        </authorList>
    </citation>
    <scope>NUCLEOTIDE SEQUENCE [MRNA] (ISOFORM 1)</scope>
    <source>
        <strain>C57BL/6J</strain>
    </source>
</reference>
<reference key="2">
    <citation type="journal article" date="2005" name="Science">
        <title>The transcriptional landscape of the mammalian genome.</title>
        <authorList>
            <person name="Carninci P."/>
            <person name="Kasukawa T."/>
            <person name="Katayama S."/>
            <person name="Gough J."/>
            <person name="Frith M.C."/>
            <person name="Maeda N."/>
            <person name="Oyama R."/>
            <person name="Ravasi T."/>
            <person name="Lenhard B."/>
            <person name="Wells C."/>
            <person name="Kodzius R."/>
            <person name="Shimokawa K."/>
            <person name="Bajic V.B."/>
            <person name="Brenner S.E."/>
            <person name="Batalov S."/>
            <person name="Forrest A.R."/>
            <person name="Zavolan M."/>
            <person name="Davis M.J."/>
            <person name="Wilming L.G."/>
            <person name="Aidinis V."/>
            <person name="Allen J.E."/>
            <person name="Ambesi-Impiombato A."/>
            <person name="Apweiler R."/>
            <person name="Aturaliya R.N."/>
            <person name="Bailey T.L."/>
            <person name="Bansal M."/>
            <person name="Baxter L."/>
            <person name="Beisel K.W."/>
            <person name="Bersano T."/>
            <person name="Bono H."/>
            <person name="Chalk A.M."/>
            <person name="Chiu K.P."/>
            <person name="Choudhary V."/>
            <person name="Christoffels A."/>
            <person name="Clutterbuck D.R."/>
            <person name="Crowe M.L."/>
            <person name="Dalla E."/>
            <person name="Dalrymple B.P."/>
            <person name="de Bono B."/>
            <person name="Della Gatta G."/>
            <person name="di Bernardo D."/>
            <person name="Down T."/>
            <person name="Engstrom P."/>
            <person name="Fagiolini M."/>
            <person name="Faulkner G."/>
            <person name="Fletcher C.F."/>
            <person name="Fukushima T."/>
            <person name="Furuno M."/>
            <person name="Futaki S."/>
            <person name="Gariboldi M."/>
            <person name="Georgii-Hemming P."/>
            <person name="Gingeras T.R."/>
            <person name="Gojobori T."/>
            <person name="Green R.E."/>
            <person name="Gustincich S."/>
            <person name="Harbers M."/>
            <person name="Hayashi Y."/>
            <person name="Hensch T.K."/>
            <person name="Hirokawa N."/>
            <person name="Hill D."/>
            <person name="Huminiecki L."/>
            <person name="Iacono M."/>
            <person name="Ikeo K."/>
            <person name="Iwama A."/>
            <person name="Ishikawa T."/>
            <person name="Jakt M."/>
            <person name="Kanapin A."/>
            <person name="Katoh M."/>
            <person name="Kawasawa Y."/>
            <person name="Kelso J."/>
            <person name="Kitamura H."/>
            <person name="Kitano H."/>
            <person name="Kollias G."/>
            <person name="Krishnan S.P."/>
            <person name="Kruger A."/>
            <person name="Kummerfeld S.K."/>
            <person name="Kurochkin I.V."/>
            <person name="Lareau L.F."/>
            <person name="Lazarevic D."/>
            <person name="Lipovich L."/>
            <person name="Liu J."/>
            <person name="Liuni S."/>
            <person name="McWilliam S."/>
            <person name="Madan Babu M."/>
            <person name="Madera M."/>
            <person name="Marchionni L."/>
            <person name="Matsuda H."/>
            <person name="Matsuzawa S."/>
            <person name="Miki H."/>
            <person name="Mignone F."/>
            <person name="Miyake S."/>
            <person name="Morris K."/>
            <person name="Mottagui-Tabar S."/>
            <person name="Mulder N."/>
            <person name="Nakano N."/>
            <person name="Nakauchi H."/>
            <person name="Ng P."/>
            <person name="Nilsson R."/>
            <person name="Nishiguchi S."/>
            <person name="Nishikawa S."/>
            <person name="Nori F."/>
            <person name="Ohara O."/>
            <person name="Okazaki Y."/>
            <person name="Orlando V."/>
            <person name="Pang K.C."/>
            <person name="Pavan W.J."/>
            <person name="Pavesi G."/>
            <person name="Pesole G."/>
            <person name="Petrovsky N."/>
            <person name="Piazza S."/>
            <person name="Reed J."/>
            <person name="Reid J.F."/>
            <person name="Ring B.Z."/>
            <person name="Ringwald M."/>
            <person name="Rost B."/>
            <person name="Ruan Y."/>
            <person name="Salzberg S.L."/>
            <person name="Sandelin A."/>
            <person name="Schneider C."/>
            <person name="Schoenbach C."/>
            <person name="Sekiguchi K."/>
            <person name="Semple C.A."/>
            <person name="Seno S."/>
            <person name="Sessa L."/>
            <person name="Sheng Y."/>
            <person name="Shibata Y."/>
            <person name="Shimada H."/>
            <person name="Shimada K."/>
            <person name="Silva D."/>
            <person name="Sinclair B."/>
            <person name="Sperling S."/>
            <person name="Stupka E."/>
            <person name="Sugiura K."/>
            <person name="Sultana R."/>
            <person name="Takenaka Y."/>
            <person name="Taki K."/>
            <person name="Tammoja K."/>
            <person name="Tan S.L."/>
            <person name="Tang S."/>
            <person name="Taylor M.S."/>
            <person name="Tegner J."/>
            <person name="Teichmann S.A."/>
            <person name="Ueda H.R."/>
            <person name="van Nimwegen E."/>
            <person name="Verardo R."/>
            <person name="Wei C.L."/>
            <person name="Yagi K."/>
            <person name="Yamanishi H."/>
            <person name="Zabarovsky E."/>
            <person name="Zhu S."/>
            <person name="Zimmer A."/>
            <person name="Hide W."/>
            <person name="Bult C."/>
            <person name="Grimmond S.M."/>
            <person name="Teasdale R.D."/>
            <person name="Liu E.T."/>
            <person name="Brusic V."/>
            <person name="Quackenbush J."/>
            <person name="Wahlestedt C."/>
            <person name="Mattick J.S."/>
            <person name="Hume D.A."/>
            <person name="Kai C."/>
            <person name="Sasaki D."/>
            <person name="Tomaru Y."/>
            <person name="Fukuda S."/>
            <person name="Kanamori-Katayama M."/>
            <person name="Suzuki M."/>
            <person name="Aoki J."/>
            <person name="Arakawa T."/>
            <person name="Iida J."/>
            <person name="Imamura K."/>
            <person name="Itoh M."/>
            <person name="Kato T."/>
            <person name="Kawaji H."/>
            <person name="Kawagashira N."/>
            <person name="Kawashima T."/>
            <person name="Kojima M."/>
            <person name="Kondo S."/>
            <person name="Konno H."/>
            <person name="Nakano K."/>
            <person name="Ninomiya N."/>
            <person name="Nishio T."/>
            <person name="Okada M."/>
            <person name="Plessy C."/>
            <person name="Shibata K."/>
            <person name="Shiraki T."/>
            <person name="Suzuki S."/>
            <person name="Tagami M."/>
            <person name="Waki K."/>
            <person name="Watahiki A."/>
            <person name="Okamura-Oho Y."/>
            <person name="Suzuki H."/>
            <person name="Kawai J."/>
            <person name="Hayashizaki Y."/>
        </authorList>
    </citation>
    <scope>NUCLEOTIDE SEQUENCE [LARGE SCALE MRNA] (ISOFORM 2)</scope>
    <source>
        <strain>C57BL/6J</strain>
        <tissue>Embryonic stem cell</tissue>
    </source>
</reference>
<reference key="3">
    <citation type="journal article" date="2004" name="Genome Res.">
        <title>The status, quality, and expansion of the NIH full-length cDNA project: the Mammalian Gene Collection (MGC).</title>
        <authorList>
            <consortium name="The MGC Project Team"/>
        </authorList>
    </citation>
    <scope>NUCLEOTIDE SEQUENCE [LARGE SCALE MRNA] (ISOFORM 2)</scope>
    <source>
        <tissue>Brain</tissue>
    </source>
</reference>
<accession>Q3URS3</accession>
<accession>B9EJP8</accession>
<accession>H9C9P1</accession>
<comment type="alternative products">
    <event type="alternative splicing"/>
    <isoform>
        <id>Q3URS3-1</id>
        <name>1</name>
        <sequence type="displayed"/>
    </isoform>
    <isoform>
        <id>Q3URS3-2</id>
        <name>2</name>
        <sequence type="described" ref="VSP_044127"/>
    </isoform>
</comment>
<gene>
    <name type="primary">Lrcol1</name>
    <name type="synonym">Clpsl3</name>
    <name type="synonym">Gm1679</name>
</gene>